<comment type="similarity">
    <text evidence="1">Belongs to the herpesviridae BBLF2 family.</text>
</comment>
<name>VG40_SHV21</name>
<accession>Q01026</accession>
<organism>
    <name type="scientific">Saimiriine herpesvirus 2 (strain 11)</name>
    <name type="common">SaHV-2</name>
    <name type="synonym">Herpesvirus saimiri</name>
    <dbReference type="NCBI Taxonomy" id="10383"/>
    <lineage>
        <taxon>Viruses</taxon>
        <taxon>Duplodnaviria</taxon>
        <taxon>Heunggongvirae</taxon>
        <taxon>Peploviricota</taxon>
        <taxon>Herviviricetes</taxon>
        <taxon>Herpesvirales</taxon>
        <taxon>Orthoherpesviridae</taxon>
        <taxon>Gammaherpesvirinae</taxon>
        <taxon>Rhadinovirus</taxon>
        <taxon>Rhadinovirus saimiriinegamma2</taxon>
        <taxon>Saimiriine herpesvirus 2</taxon>
    </lineage>
</organism>
<keyword id="KW-1185">Reference proteome</keyword>
<organismHost>
    <name type="scientific">Saimiri sciureus</name>
    <name type="common">Common squirrel monkey</name>
    <dbReference type="NCBI Taxonomy" id="9521"/>
</organismHost>
<sequence>MSIINSIDCHVIGIYFYNVILEKNLIIWQLNIITCSSHESTFCFVVDLLTAEDRDSILRVCSDQPTPQHHGVSLMTWELKLRMSQPILQTCMNNIRKPITILMSTDKVALEARPVLEKEACSGRYLKGAYLYSQCSQILASVPKLTLENNVQQWYPYLLNNSTIEDLEIHIKCSEGLYTCSSNSEPPLKKTQHLKIEDVFKIVDHSFLVAKTNIHIRTVIPIFHLLWVNVECKWNGCLPEFFRALHSKVYREFTGIAPIFTYLFPGGCPEATPFDIYFCGFPFVNLNCGKPEKILLCDLPRLHCPQILLSIPGNHADDLLCQPRDIPLPSIPKIWPINGIDINSKFCLEETSEIAFLNFKHIIVEVDFLCTICYIMGCKSDEIYNIMKFGSNNLNSTLQTWYNWFISTIFKWATQRSFNWTAMTQFKVYLSAVYASEIPKVSYKLVKDYE</sequence>
<evidence type="ECO:0000305" key="1"/>
<dbReference type="EMBL" id="X64346">
    <property type="protein sequence ID" value="CAA45663.1"/>
    <property type="molecule type" value="Genomic_DNA"/>
</dbReference>
<dbReference type="RefSeq" id="NP_040242.1">
    <property type="nucleotide sequence ID" value="NC_001350.1"/>
</dbReference>
<dbReference type="KEGG" id="vg:1682490"/>
<dbReference type="Proteomes" id="UP000000587">
    <property type="component" value="Segment"/>
</dbReference>
<dbReference type="GO" id="GO:0019079">
    <property type="term" value="P:viral genome replication"/>
    <property type="evidence" value="ECO:0007669"/>
    <property type="project" value="InterPro"/>
</dbReference>
<dbReference type="InterPro" id="IPR004996">
    <property type="entry name" value="HSV_HEPA"/>
</dbReference>
<dbReference type="Pfam" id="PF03324">
    <property type="entry name" value="Herpes_HEPA"/>
    <property type="match status" value="1"/>
</dbReference>
<proteinExistence type="inferred from homology"/>
<protein>
    <recommendedName>
        <fullName>Uncharacterized gene 40 protein</fullName>
    </recommendedName>
</protein>
<feature type="chain" id="PRO_0000116266" description="Uncharacterized gene 40 protein">
    <location>
        <begin position="1"/>
        <end position="450"/>
    </location>
</feature>
<gene>
    <name type="primary">40</name>
</gene>
<reference key="1">
    <citation type="journal article" date="1992" name="J. Virol.">
        <title>Primary structure of the herpesvirus saimiri genome.</title>
        <authorList>
            <person name="Albrecht J.-C."/>
            <person name="Nicholas J."/>
            <person name="Biller D."/>
            <person name="Cameron K.R."/>
            <person name="Biesinger B."/>
            <person name="Newman C."/>
            <person name="Wittmann S."/>
            <person name="Craxton M.A."/>
            <person name="Coleman H."/>
            <person name="Fleckenstein B."/>
            <person name="Honess R.W."/>
        </authorList>
    </citation>
    <scope>NUCLEOTIDE SEQUENCE [LARGE SCALE GENOMIC DNA]</scope>
</reference>